<feature type="chain" id="PRO_0000385290" description="Serine/threonine-protein kinase PLK4">
    <location>
        <begin position="1"/>
        <end position="762"/>
    </location>
</feature>
<feature type="domain" description="Protein kinase" evidence="3">
    <location>
        <begin position="14"/>
        <end position="268"/>
    </location>
</feature>
<feature type="domain" description="Cryptic POLO box 1 (CPB1)" evidence="4">
    <location>
        <begin position="383"/>
        <end position="498"/>
    </location>
</feature>
<feature type="domain" description="Cryptic POLO box 2 (CPB2)" evidence="5">
    <location>
        <begin position="499"/>
        <end position="602"/>
    </location>
</feature>
<feature type="domain" description="POLO box" evidence="2">
    <location>
        <begin position="657"/>
        <end position="736"/>
    </location>
</feature>
<feature type="active site" description="Proton acceptor" evidence="3">
    <location>
        <position position="139"/>
    </location>
</feature>
<feature type="binding site" evidence="3">
    <location>
        <begin position="20"/>
        <end position="28"/>
    </location>
    <ligand>
        <name>ATP</name>
        <dbReference type="ChEBI" id="CHEBI:30616"/>
    </ligand>
</feature>
<feature type="binding site" evidence="3">
    <location>
        <position position="43"/>
    </location>
    <ligand>
        <name>ATP</name>
        <dbReference type="ChEBI" id="CHEBI:30616"/>
    </ligand>
</feature>
<reference key="1">
    <citation type="journal article" date="2007" name="Nature">
        <title>Evolution of genes and genomes on the Drosophila phylogeny.</title>
        <authorList>
            <consortium name="Drosophila 12 genomes consortium"/>
        </authorList>
    </citation>
    <scope>NUCLEOTIDE SEQUENCE [LARGE SCALE GENOMIC DNA]</scope>
    <source>
        <strain>Tucson 15287-2541.00</strain>
    </source>
</reference>
<dbReference type="EC" id="2.7.11.21"/>
<dbReference type="EMBL" id="CH916366">
    <property type="protein sequence ID" value="EDV97250.1"/>
    <property type="molecule type" value="Genomic_DNA"/>
</dbReference>
<dbReference type="SMR" id="B4J3F1"/>
<dbReference type="FunCoup" id="B4J3F1">
    <property type="interactions" value="337"/>
</dbReference>
<dbReference type="STRING" id="7222.B4J3F1"/>
<dbReference type="EnsemblMetazoa" id="FBtr0152158">
    <property type="protein sequence ID" value="FBpp0150650"/>
    <property type="gene ID" value="FBgn0124215"/>
</dbReference>
<dbReference type="EnsemblMetazoa" id="XM_001984866.3">
    <property type="protein sequence ID" value="XP_001984902.1"/>
    <property type="gene ID" value="LOC6556999"/>
</dbReference>
<dbReference type="GeneID" id="6556999"/>
<dbReference type="KEGG" id="dgr:6556999"/>
<dbReference type="eggNOG" id="KOG0575">
    <property type="taxonomic scope" value="Eukaryota"/>
</dbReference>
<dbReference type="HOGENOM" id="CLU_008726_2_0_1"/>
<dbReference type="InParanoid" id="B4J3F1"/>
<dbReference type="OMA" id="LPSKHWK"/>
<dbReference type="OrthoDB" id="10004143at2759"/>
<dbReference type="PhylomeDB" id="B4J3F1"/>
<dbReference type="ChiTaRS" id="SAK">
    <property type="organism name" value="fly"/>
</dbReference>
<dbReference type="Proteomes" id="UP000001070">
    <property type="component" value="Unassembled WGS sequence"/>
</dbReference>
<dbReference type="GO" id="GO:0005814">
    <property type="term" value="C:centriole"/>
    <property type="evidence" value="ECO:0007669"/>
    <property type="project" value="UniProtKB-SubCell"/>
</dbReference>
<dbReference type="GO" id="GO:0005737">
    <property type="term" value="C:cytoplasm"/>
    <property type="evidence" value="ECO:0007669"/>
    <property type="project" value="UniProtKB-KW"/>
</dbReference>
<dbReference type="GO" id="GO:0005634">
    <property type="term" value="C:nucleus"/>
    <property type="evidence" value="ECO:0007669"/>
    <property type="project" value="TreeGrafter"/>
</dbReference>
<dbReference type="GO" id="GO:0005524">
    <property type="term" value="F:ATP binding"/>
    <property type="evidence" value="ECO:0007669"/>
    <property type="project" value="UniProtKB-KW"/>
</dbReference>
<dbReference type="GO" id="GO:0106310">
    <property type="term" value="F:protein serine kinase activity"/>
    <property type="evidence" value="ECO:0007669"/>
    <property type="project" value="RHEA"/>
</dbReference>
<dbReference type="GO" id="GO:0004674">
    <property type="term" value="F:protein serine/threonine kinase activity"/>
    <property type="evidence" value="ECO:0007669"/>
    <property type="project" value="UniProtKB-KW"/>
</dbReference>
<dbReference type="CDD" id="cd13114">
    <property type="entry name" value="POLO_box_Plk4_1"/>
    <property type="match status" value="1"/>
</dbReference>
<dbReference type="CDD" id="cd13115">
    <property type="entry name" value="POLO_box_Plk4_2"/>
    <property type="match status" value="1"/>
</dbReference>
<dbReference type="CDD" id="cd13116">
    <property type="entry name" value="POLO_box_Plk4_3"/>
    <property type="match status" value="1"/>
</dbReference>
<dbReference type="FunFam" id="3.30.200.20:FF:000042">
    <property type="entry name" value="Aurora kinase A"/>
    <property type="match status" value="1"/>
</dbReference>
<dbReference type="FunFam" id="1.10.510.10:FF:000576">
    <property type="entry name" value="Serine/threonine-protein kinase PLK4"/>
    <property type="match status" value="1"/>
</dbReference>
<dbReference type="FunFam" id="3.30.1120.120:FF:000001">
    <property type="entry name" value="serine/threonine-protein kinase PLK4 isoform X2"/>
    <property type="match status" value="1"/>
</dbReference>
<dbReference type="Gene3D" id="2.40.50.930">
    <property type="match status" value="1"/>
</dbReference>
<dbReference type="Gene3D" id="3.30.1120.120">
    <property type="match status" value="1"/>
</dbReference>
<dbReference type="Gene3D" id="3.30.1120.130">
    <property type="match status" value="1"/>
</dbReference>
<dbReference type="Gene3D" id="1.10.510.10">
    <property type="entry name" value="Transferase(Phosphotransferase) domain 1"/>
    <property type="match status" value="1"/>
</dbReference>
<dbReference type="InterPro" id="IPR011009">
    <property type="entry name" value="Kinase-like_dom_sf"/>
</dbReference>
<dbReference type="InterPro" id="IPR047108">
    <property type="entry name" value="Plk4-like_POLO_box_2_sf"/>
</dbReference>
<dbReference type="InterPro" id="IPR000959">
    <property type="entry name" value="POLO_box_dom"/>
</dbReference>
<dbReference type="InterPro" id="IPR033699">
    <property type="entry name" value="POLO_box_Plk4_1"/>
</dbReference>
<dbReference type="InterPro" id="IPR033698">
    <property type="entry name" value="POLO_box_Plk4_2"/>
</dbReference>
<dbReference type="InterPro" id="IPR033696">
    <property type="entry name" value="POLO_box_Plk4_C"/>
</dbReference>
<dbReference type="InterPro" id="IPR000719">
    <property type="entry name" value="Prot_kinase_dom"/>
</dbReference>
<dbReference type="InterPro" id="IPR017441">
    <property type="entry name" value="Protein_kinase_ATP_BS"/>
</dbReference>
<dbReference type="InterPro" id="IPR046437">
    <property type="entry name" value="Ser_Thr-PK_POLO_box_1_sf"/>
</dbReference>
<dbReference type="InterPro" id="IPR008266">
    <property type="entry name" value="Tyr_kinase_AS"/>
</dbReference>
<dbReference type="PANTHER" id="PTHR24345">
    <property type="entry name" value="SERINE/THREONINE-PROTEIN KINASE PLK"/>
    <property type="match status" value="1"/>
</dbReference>
<dbReference type="PANTHER" id="PTHR24345:SF91">
    <property type="entry name" value="SERINE_THREONINE-PROTEIN KINASE PLK4"/>
    <property type="match status" value="1"/>
</dbReference>
<dbReference type="Pfam" id="PF00069">
    <property type="entry name" value="Pkinase"/>
    <property type="match status" value="1"/>
</dbReference>
<dbReference type="Pfam" id="PF18190">
    <property type="entry name" value="Plk4_PB1"/>
    <property type="match status" value="1"/>
</dbReference>
<dbReference type="Pfam" id="PF18409">
    <property type="entry name" value="Plk4_PB2"/>
    <property type="match status" value="1"/>
</dbReference>
<dbReference type="SUPFAM" id="SSF82615">
    <property type="entry name" value="Polo-box domain"/>
    <property type="match status" value="1"/>
</dbReference>
<dbReference type="SUPFAM" id="SSF56112">
    <property type="entry name" value="Protein kinase-like (PK-like)"/>
    <property type="match status" value="1"/>
</dbReference>
<dbReference type="PROSITE" id="PS51984">
    <property type="entry name" value="CPB1"/>
    <property type="match status" value="1"/>
</dbReference>
<dbReference type="PROSITE" id="PS51985">
    <property type="entry name" value="CPB2"/>
    <property type="match status" value="1"/>
</dbReference>
<dbReference type="PROSITE" id="PS50078">
    <property type="entry name" value="POLO_BOX"/>
    <property type="match status" value="1"/>
</dbReference>
<dbReference type="PROSITE" id="PS00107">
    <property type="entry name" value="PROTEIN_KINASE_ATP"/>
    <property type="match status" value="1"/>
</dbReference>
<dbReference type="PROSITE" id="PS50011">
    <property type="entry name" value="PROTEIN_KINASE_DOM"/>
    <property type="match status" value="1"/>
</dbReference>
<proteinExistence type="inferred from homology"/>
<protein>
    <recommendedName>
        <fullName>Serine/threonine-protein kinase PLK4</fullName>
        <ecNumber>2.7.11.21</ecNumber>
    </recommendedName>
    <alternativeName>
        <fullName>Polo-like kinase 4</fullName>
        <shortName>PLK-4</shortName>
    </alternativeName>
    <alternativeName>
        <fullName>Serine/threonine-protein kinase SAK</fullName>
    </alternativeName>
</protein>
<keyword id="KW-0067">ATP-binding</keyword>
<keyword id="KW-0963">Cytoplasm</keyword>
<keyword id="KW-0206">Cytoskeleton</keyword>
<keyword id="KW-0418">Kinase</keyword>
<keyword id="KW-0547">Nucleotide-binding</keyword>
<keyword id="KW-1185">Reference proteome</keyword>
<keyword id="KW-0723">Serine/threonine-protein kinase</keyword>
<keyword id="KW-0808">Transferase</keyword>
<keyword id="KW-0832">Ubl conjugation</keyword>
<comment type="function">
    <text evidence="1">Serine/threonine-protein kinase that plays a central role in centriole duplication. Able to trigger procentriole formation on the surface of the mother centriole cylinder, using mother centriole as a platform, leading to the recruitment of centriole biogenesis proteins such as sas-6. When overexpressed, it is able to induce centrosome amplification through the simultaneous generation of multiple procentrioles adjoining each parental centriole during S phase. Centrosome amplification following overexpression can initiate tumorigenesis, highlighting the importance of centrosome regulation in cancers (By similarity).</text>
</comment>
<comment type="catalytic activity">
    <reaction>
        <text>L-seryl-[protein] + ATP = O-phospho-L-seryl-[protein] + ADP + H(+)</text>
        <dbReference type="Rhea" id="RHEA:17989"/>
        <dbReference type="Rhea" id="RHEA-COMP:9863"/>
        <dbReference type="Rhea" id="RHEA-COMP:11604"/>
        <dbReference type="ChEBI" id="CHEBI:15378"/>
        <dbReference type="ChEBI" id="CHEBI:29999"/>
        <dbReference type="ChEBI" id="CHEBI:30616"/>
        <dbReference type="ChEBI" id="CHEBI:83421"/>
        <dbReference type="ChEBI" id="CHEBI:456216"/>
        <dbReference type="EC" id="2.7.11.21"/>
    </reaction>
</comment>
<comment type="catalytic activity">
    <reaction>
        <text>L-threonyl-[protein] + ATP = O-phospho-L-threonyl-[protein] + ADP + H(+)</text>
        <dbReference type="Rhea" id="RHEA:46608"/>
        <dbReference type="Rhea" id="RHEA-COMP:11060"/>
        <dbReference type="Rhea" id="RHEA-COMP:11605"/>
        <dbReference type="ChEBI" id="CHEBI:15378"/>
        <dbReference type="ChEBI" id="CHEBI:30013"/>
        <dbReference type="ChEBI" id="CHEBI:30616"/>
        <dbReference type="ChEBI" id="CHEBI:61977"/>
        <dbReference type="ChEBI" id="CHEBI:456216"/>
        <dbReference type="EC" id="2.7.11.21"/>
    </reaction>
</comment>
<comment type="subunit">
    <text evidence="1">Homodimer.</text>
</comment>
<comment type="subcellular location">
    <subcellularLocation>
        <location evidence="1">Cytoplasm</location>
        <location evidence="1">Cytoskeleton</location>
        <location evidence="1">Microtubule organizing center</location>
        <location evidence="1">Centrosome</location>
        <location evidence="1">Centriole</location>
    </subcellularLocation>
</comment>
<comment type="PTM">
    <text evidence="1">Ubiquitinated by the SCF(Slimb) ubiquitin ligase complex; leading to its degradation by the proteasome during interphase and regulating centriole number and ensuring the block to centriole reduplication.</text>
</comment>
<comment type="similarity">
    <text evidence="3 4 5">Belongs to the protein kinase superfamily. Ser/Thr protein kinase family. CDC5/Polo subfamily.</text>
</comment>
<name>PLK4_DROGR</name>
<gene>
    <name type="primary">SAK</name>
    <name type="ORF">GH16744</name>
</gene>
<sequence>MLPFRNYGETIDEYEVQHLLGKGGFACVYKAKCLRTQQNVAIKMIDKKLIQGSGLSSRVRQEVEIHSRLKHPSVLQLHTFFQDGNYVYLVLELADNGELHRYMNQQMKRPFTEQEASSILRQVVDGLLYLHSHNIMHRDISLSNLLLSRDMHVKIADFGLATQLKRPDERHMTMCGTPNYISPEVVSHMSHGLPADLWSVGCMLYTLLVGRPPFDTDAVQSTLNKVVLSDYTMPSHLSYEARDLIEKLLRKNPHERISLEQVLRHPFMVKAGGGSIISYTTTPGASDGYGQSIASGDSGIVTFASNDSKNSQRHMLPQIQEEFGYYQEQRKNYAPHPVYRQSSAEPLNSTEMEWQRIGQSNGHFLAHSTPATGGQVAAKKNNAECISMPPLNTLRLQPTRYKTKNAIMSIMANGEVVIEFIKCKSKMNEDRIVDICRISGDGRRIIIYQPDPGRGLPIRDQPSAVQPENYAYNYDNLPSKHWKKYVYAARFVSLVKSKTPKVTYFSGLAKCHLMENMADFEMCYYSGAKLTKSPTDAVKLYNKHGLLITDQTSGEAMRWIEHSNECFAHCLSICNALELAQTGSNTCFPVTIGRRPTPEVMPSQQRADGLRDTTNFAYSTPKSQQGSINFSISTISSMRSGNDLIGSQLLAAQQNVPIKRLNVPGVGTATELSHGIVQVQFYDGSVISIIPETQGGGITYTQSSGLSTHFPDHDDLPIAVRDRLSQLPQVQMKLKSAPLIGSKKFDCKTTTESAPWHNRMLI</sequence>
<accession>B4J3F1</accession>
<evidence type="ECO:0000250" key="1"/>
<evidence type="ECO:0000255" key="2">
    <source>
        <dbReference type="PROSITE-ProRule" id="PRU00154"/>
    </source>
</evidence>
<evidence type="ECO:0000255" key="3">
    <source>
        <dbReference type="PROSITE-ProRule" id="PRU00159"/>
    </source>
</evidence>
<evidence type="ECO:0000255" key="4">
    <source>
        <dbReference type="PROSITE-ProRule" id="PRU01328"/>
    </source>
</evidence>
<evidence type="ECO:0000255" key="5">
    <source>
        <dbReference type="PROSITE-ProRule" id="PRU01329"/>
    </source>
</evidence>
<organism>
    <name type="scientific">Drosophila grimshawi</name>
    <name type="common">Hawaiian fruit fly</name>
    <name type="synonym">Idiomyia grimshawi</name>
    <dbReference type="NCBI Taxonomy" id="7222"/>
    <lineage>
        <taxon>Eukaryota</taxon>
        <taxon>Metazoa</taxon>
        <taxon>Ecdysozoa</taxon>
        <taxon>Arthropoda</taxon>
        <taxon>Hexapoda</taxon>
        <taxon>Insecta</taxon>
        <taxon>Pterygota</taxon>
        <taxon>Neoptera</taxon>
        <taxon>Endopterygota</taxon>
        <taxon>Diptera</taxon>
        <taxon>Brachycera</taxon>
        <taxon>Muscomorpha</taxon>
        <taxon>Ephydroidea</taxon>
        <taxon>Drosophilidae</taxon>
        <taxon>Drosophila</taxon>
        <taxon>Hawaiian Drosophila</taxon>
    </lineage>
</organism>